<organism>
    <name type="scientific">Schistosoma japonicum</name>
    <name type="common">Blood fluke</name>
    <dbReference type="NCBI Taxonomy" id="6182"/>
    <lineage>
        <taxon>Eukaryota</taxon>
        <taxon>Metazoa</taxon>
        <taxon>Spiralia</taxon>
        <taxon>Lophotrochozoa</taxon>
        <taxon>Platyhelminthes</taxon>
        <taxon>Trematoda</taxon>
        <taxon>Digenea</taxon>
        <taxon>Strigeidida</taxon>
        <taxon>Schistosomatoidea</taxon>
        <taxon>Schistosomatidae</taxon>
        <taxon>Schistosoma</taxon>
    </lineage>
</organism>
<proteinExistence type="evidence at transcript level"/>
<protein>
    <recommendedName>
        <fullName>UPF0506 protein SJCHGC02380</fullName>
    </recommendedName>
</protein>
<gene>
    <name type="ORF">SJCHGC02380</name>
</gene>
<keyword id="KW-1015">Disulfide bond</keyword>
<keyword id="KW-0325">Glycoprotein</keyword>
<keyword id="KW-0960">Knottin</keyword>
<keyword id="KW-0964">Secreted</keyword>
<keyword id="KW-0732">Signal</keyword>
<dbReference type="EMBL" id="AY814993">
    <property type="protein sequence ID" value="AAW26725.1"/>
    <property type="molecule type" value="mRNA"/>
</dbReference>
<dbReference type="SMR" id="Q5DBT1"/>
<dbReference type="GO" id="GO:0005576">
    <property type="term" value="C:extracellular region"/>
    <property type="evidence" value="ECO:0007669"/>
    <property type="project" value="UniProtKB-SubCell"/>
</dbReference>
<dbReference type="InterPro" id="IPR021712">
    <property type="entry name" value="UPF0506"/>
</dbReference>
<dbReference type="Pfam" id="PF11703">
    <property type="entry name" value="UPF0506"/>
    <property type="match status" value="1"/>
</dbReference>
<feature type="signal peptide" evidence="1">
    <location>
        <begin position="1"/>
        <end position="18"/>
    </location>
</feature>
<feature type="chain" id="PRO_0000311406" description="UPF0506 protein SJCHGC02380">
    <location>
        <begin position="19"/>
        <end position="150"/>
    </location>
</feature>
<feature type="glycosylation site" description="N-linked (GlcNAc...) asparagine" evidence="1">
    <location>
        <position position="20"/>
    </location>
</feature>
<feature type="glycosylation site" description="N-linked (GlcNAc...) asparagine" evidence="1">
    <location>
        <position position="24"/>
    </location>
</feature>
<feature type="glycosylation site" description="N-linked (GlcNAc...) asparagine" evidence="1">
    <location>
        <position position="36"/>
    </location>
</feature>
<feature type="glycosylation site" description="N-linked (GlcNAc...) asparagine" evidence="1">
    <location>
        <position position="48"/>
    </location>
</feature>
<feature type="glycosylation site" description="N-linked (GlcNAc...) asparagine" evidence="1">
    <location>
        <position position="52"/>
    </location>
</feature>
<feature type="glycosylation site" description="N-linked (GlcNAc...) asparagine" evidence="1">
    <location>
        <position position="110"/>
    </location>
</feature>
<feature type="disulfide bond" evidence="2">
    <location>
        <begin position="116"/>
        <end position="130"/>
    </location>
</feature>
<feature type="disulfide bond" evidence="2">
    <location>
        <begin position="123"/>
        <end position="134"/>
    </location>
</feature>
<feature type="disulfide bond" evidence="2">
    <location>
        <begin position="129"/>
        <end position="139"/>
    </location>
</feature>
<reference key="1">
    <citation type="journal article" date="2006" name="PLoS Pathog.">
        <title>New perspectives on host-parasite interplay by comparative transcriptomic and proteomic analyses of Schistosoma japonicum.</title>
        <authorList>
            <person name="Liu F."/>
            <person name="Lu J."/>
            <person name="Hu W."/>
            <person name="Wang S.-Y."/>
            <person name="Cui S.-J."/>
            <person name="Chi M."/>
            <person name="Yan Q."/>
            <person name="Wang X.-R."/>
            <person name="Song H.-D."/>
            <person name="Xu X.-N."/>
            <person name="Wang J.-J."/>
            <person name="Zhang X.-L."/>
            <person name="Zhang X."/>
            <person name="Wang Z.-Q."/>
            <person name="Xue C.-L."/>
            <person name="Brindley P.J."/>
            <person name="McManus D.P."/>
            <person name="Yang P.-Y."/>
            <person name="Feng Z."/>
            <person name="Chen Z."/>
            <person name="Han Z.-G."/>
        </authorList>
    </citation>
    <scope>NUCLEOTIDE SEQUENCE [LARGE SCALE MRNA]</scope>
</reference>
<accession>Q5DBT1</accession>
<comment type="subcellular location">
    <subcellularLocation>
        <location evidence="2">Secreted</location>
    </subcellularLocation>
</comment>
<comment type="domain">
    <text evidence="2">The presence of a 'disulfide through disulfide knot' structurally defines this protein as a knottin.</text>
</comment>
<comment type="similarity">
    <text evidence="2">Belongs to the UPF0506 family.</text>
</comment>
<sequence>MNTCIQLLILCLVTVINSENSTDNSTENTIENEIENATETELSEAIENETENVTETELPETVETEIQTEAQNQPQIPKQKYCKSEGQYCSRTYFHRCCGNLVCQLHGFFNGTCVQCLAERKFCIWSSECCSRRCRLFRCRKNPYVQVIPY</sequence>
<name>SJ380_SCHJA</name>
<evidence type="ECO:0000255" key="1"/>
<evidence type="ECO:0000305" key="2"/>